<accession>Q97BW2</accession>
<reference key="1">
    <citation type="journal article" date="2000" name="Proc. Natl. Acad. Sci. U.S.A.">
        <title>Archaeal adaptation to higher temperatures revealed by genomic sequence of Thermoplasma volcanium.</title>
        <authorList>
            <person name="Kawashima T."/>
            <person name="Amano N."/>
            <person name="Koike H."/>
            <person name="Makino S."/>
            <person name="Higuchi S."/>
            <person name="Kawashima-Ohya Y."/>
            <person name="Watanabe K."/>
            <person name="Yamazaki M."/>
            <person name="Kanehori K."/>
            <person name="Kawamoto T."/>
            <person name="Nunoshiba T."/>
            <person name="Yamamoto Y."/>
            <person name="Aramaki H."/>
            <person name="Makino K."/>
            <person name="Suzuki M."/>
        </authorList>
    </citation>
    <scope>NUCLEOTIDE SEQUENCE [LARGE SCALE GENOMIC DNA]</scope>
    <source>
        <strain>ATCC 51530 / DSM 4299 / JCM 9571 / NBRC 15438 / GSS1</strain>
    </source>
</reference>
<keyword id="KW-0479">Metal-binding</keyword>
<keyword id="KW-0687">Ribonucleoprotein</keyword>
<keyword id="KW-0689">Ribosomal protein</keyword>
<keyword id="KW-0694">RNA-binding</keyword>
<keyword id="KW-0699">rRNA-binding</keyword>
<keyword id="KW-0862">Zinc</keyword>
<proteinExistence type="inferred from homology"/>
<protein>
    <recommendedName>
        <fullName evidence="1">Small ribosomal subunit protein uS14</fullName>
    </recommendedName>
    <alternativeName>
        <fullName evidence="2">30S ribosomal protein S14 type Z</fullName>
    </alternativeName>
</protein>
<sequence>MSQVKLQPKKKYGHIDGCVRCGRKRGIVRKYGLHLCRQCFRETARQLGFEKYS</sequence>
<dbReference type="EMBL" id="BA000011">
    <property type="protein sequence ID" value="BAB59485.1"/>
    <property type="molecule type" value="Genomic_DNA"/>
</dbReference>
<dbReference type="RefSeq" id="WP_010916597.1">
    <property type="nucleotide sequence ID" value="NC_002689.2"/>
</dbReference>
<dbReference type="SMR" id="Q97BW2"/>
<dbReference type="STRING" id="273116.gene:9381120"/>
<dbReference type="PaxDb" id="273116-14324558"/>
<dbReference type="GeneID" id="32154007"/>
<dbReference type="KEGG" id="tvo:TVG0339762"/>
<dbReference type="eggNOG" id="arCOG00782">
    <property type="taxonomic scope" value="Archaea"/>
</dbReference>
<dbReference type="HOGENOM" id="CLU_177289_1_1_2"/>
<dbReference type="OrthoDB" id="5615at2157"/>
<dbReference type="PhylomeDB" id="Q97BW2"/>
<dbReference type="Proteomes" id="UP000001017">
    <property type="component" value="Chromosome"/>
</dbReference>
<dbReference type="GO" id="GO:0022627">
    <property type="term" value="C:cytosolic small ribosomal subunit"/>
    <property type="evidence" value="ECO:0007669"/>
    <property type="project" value="TreeGrafter"/>
</dbReference>
<dbReference type="GO" id="GO:0019843">
    <property type="term" value="F:rRNA binding"/>
    <property type="evidence" value="ECO:0007669"/>
    <property type="project" value="UniProtKB-UniRule"/>
</dbReference>
<dbReference type="GO" id="GO:0003735">
    <property type="term" value="F:structural constituent of ribosome"/>
    <property type="evidence" value="ECO:0007669"/>
    <property type="project" value="InterPro"/>
</dbReference>
<dbReference type="GO" id="GO:0008270">
    <property type="term" value="F:zinc ion binding"/>
    <property type="evidence" value="ECO:0007669"/>
    <property type="project" value="UniProtKB-UniRule"/>
</dbReference>
<dbReference type="GO" id="GO:0002181">
    <property type="term" value="P:cytoplasmic translation"/>
    <property type="evidence" value="ECO:0007669"/>
    <property type="project" value="TreeGrafter"/>
</dbReference>
<dbReference type="FunFam" id="4.10.830.10:FF:000002">
    <property type="entry name" value="40S ribosomal protein S29"/>
    <property type="match status" value="1"/>
</dbReference>
<dbReference type="Gene3D" id="4.10.830.10">
    <property type="entry name" value="30s Ribosomal Protein S14, Chain N"/>
    <property type="match status" value="1"/>
</dbReference>
<dbReference type="HAMAP" id="MF_01364_A">
    <property type="entry name" value="Ribosomal_uS14_2_A"/>
    <property type="match status" value="1"/>
</dbReference>
<dbReference type="InterPro" id="IPR001209">
    <property type="entry name" value="Ribosomal_uS14"/>
</dbReference>
<dbReference type="InterPro" id="IPR023676">
    <property type="entry name" value="Ribosomal_uS14_arc"/>
</dbReference>
<dbReference type="InterPro" id="IPR018271">
    <property type="entry name" value="Ribosomal_uS14_CS"/>
</dbReference>
<dbReference type="InterPro" id="IPR039744">
    <property type="entry name" value="RIbosomal_uS14_euk_arc"/>
</dbReference>
<dbReference type="InterPro" id="IPR043140">
    <property type="entry name" value="Ribosomal_uS14_sf"/>
</dbReference>
<dbReference type="NCBIfam" id="NF004424">
    <property type="entry name" value="PRK05766.1"/>
    <property type="match status" value="1"/>
</dbReference>
<dbReference type="PANTHER" id="PTHR12010">
    <property type="entry name" value="40S RIBOSOMAL PROTEIN S29"/>
    <property type="match status" value="1"/>
</dbReference>
<dbReference type="PANTHER" id="PTHR12010:SF2">
    <property type="entry name" value="40S RIBOSOMAL PROTEIN S29"/>
    <property type="match status" value="1"/>
</dbReference>
<dbReference type="Pfam" id="PF00253">
    <property type="entry name" value="Ribosomal_S14"/>
    <property type="match status" value="1"/>
</dbReference>
<dbReference type="SUPFAM" id="SSF57716">
    <property type="entry name" value="Glucocorticoid receptor-like (DNA-binding domain)"/>
    <property type="match status" value="1"/>
</dbReference>
<dbReference type="PROSITE" id="PS00527">
    <property type="entry name" value="RIBOSOMAL_S14"/>
    <property type="match status" value="1"/>
</dbReference>
<evidence type="ECO:0000255" key="1">
    <source>
        <dbReference type="HAMAP-Rule" id="MF_01364"/>
    </source>
</evidence>
<evidence type="ECO:0000305" key="2"/>
<name>RS14Z_THEVO</name>
<organism>
    <name type="scientific">Thermoplasma volcanium (strain ATCC 51530 / DSM 4299 / JCM 9571 / NBRC 15438 / GSS1)</name>
    <dbReference type="NCBI Taxonomy" id="273116"/>
    <lineage>
        <taxon>Archaea</taxon>
        <taxon>Methanobacteriati</taxon>
        <taxon>Thermoplasmatota</taxon>
        <taxon>Thermoplasmata</taxon>
        <taxon>Thermoplasmatales</taxon>
        <taxon>Thermoplasmataceae</taxon>
        <taxon>Thermoplasma</taxon>
    </lineage>
</organism>
<comment type="function">
    <text evidence="1">Binds 16S rRNA, required for the assembly of 30S particles.</text>
</comment>
<comment type="cofactor">
    <cofactor evidence="1">
        <name>Zn(2+)</name>
        <dbReference type="ChEBI" id="CHEBI:29105"/>
    </cofactor>
    <text evidence="1">Binds 1 zinc ion per subunit.</text>
</comment>
<comment type="subunit">
    <text evidence="1">Part of the 30S ribosomal subunit.</text>
</comment>
<comment type="similarity">
    <text evidence="1">Belongs to the universal ribosomal protein uS14 family. Zinc-binding uS14 subfamily.</text>
</comment>
<gene>
    <name evidence="1" type="primary">rps14</name>
    <name type="ordered locus">TV0343</name>
    <name type="ORF">TVG0339762</name>
</gene>
<feature type="chain" id="PRO_0000131002" description="Small ribosomal subunit protein uS14">
    <location>
        <begin position="1"/>
        <end position="53"/>
    </location>
</feature>
<feature type="binding site" evidence="1">
    <location>
        <position position="18"/>
    </location>
    <ligand>
        <name>Zn(2+)</name>
        <dbReference type="ChEBI" id="CHEBI:29105"/>
    </ligand>
</feature>
<feature type="binding site" evidence="1">
    <location>
        <position position="21"/>
    </location>
    <ligand>
        <name>Zn(2+)</name>
        <dbReference type="ChEBI" id="CHEBI:29105"/>
    </ligand>
</feature>
<feature type="binding site" evidence="1">
    <location>
        <position position="36"/>
    </location>
    <ligand>
        <name>Zn(2+)</name>
        <dbReference type="ChEBI" id="CHEBI:29105"/>
    </ligand>
</feature>
<feature type="binding site" evidence="1">
    <location>
        <position position="39"/>
    </location>
    <ligand>
        <name>Zn(2+)</name>
        <dbReference type="ChEBI" id="CHEBI:29105"/>
    </ligand>
</feature>